<gene>
    <name evidence="1" type="primary">groEL1</name>
    <name evidence="1" type="synonym">groL1</name>
    <name type="ordered locus">Mflv_4924</name>
</gene>
<dbReference type="EC" id="5.6.1.7" evidence="1"/>
<dbReference type="EMBL" id="CP000656">
    <property type="protein sequence ID" value="ABP47390.1"/>
    <property type="molecule type" value="Genomic_DNA"/>
</dbReference>
<dbReference type="SMR" id="A4TEN6"/>
<dbReference type="STRING" id="350054.Mflv_4924"/>
<dbReference type="KEGG" id="mgi:Mflv_4924"/>
<dbReference type="eggNOG" id="COG0459">
    <property type="taxonomic scope" value="Bacteria"/>
</dbReference>
<dbReference type="HOGENOM" id="CLU_016503_3_0_11"/>
<dbReference type="OrthoDB" id="9766614at2"/>
<dbReference type="GO" id="GO:0005737">
    <property type="term" value="C:cytoplasm"/>
    <property type="evidence" value="ECO:0007669"/>
    <property type="project" value="UniProtKB-SubCell"/>
</dbReference>
<dbReference type="GO" id="GO:0005524">
    <property type="term" value="F:ATP binding"/>
    <property type="evidence" value="ECO:0007669"/>
    <property type="project" value="UniProtKB-UniRule"/>
</dbReference>
<dbReference type="GO" id="GO:0140662">
    <property type="term" value="F:ATP-dependent protein folding chaperone"/>
    <property type="evidence" value="ECO:0007669"/>
    <property type="project" value="InterPro"/>
</dbReference>
<dbReference type="GO" id="GO:0016853">
    <property type="term" value="F:isomerase activity"/>
    <property type="evidence" value="ECO:0007669"/>
    <property type="project" value="UniProtKB-KW"/>
</dbReference>
<dbReference type="GO" id="GO:0051082">
    <property type="term" value="F:unfolded protein binding"/>
    <property type="evidence" value="ECO:0007669"/>
    <property type="project" value="UniProtKB-UniRule"/>
</dbReference>
<dbReference type="GO" id="GO:0042026">
    <property type="term" value="P:protein refolding"/>
    <property type="evidence" value="ECO:0007669"/>
    <property type="project" value="UniProtKB-UniRule"/>
</dbReference>
<dbReference type="CDD" id="cd03344">
    <property type="entry name" value="GroEL"/>
    <property type="match status" value="1"/>
</dbReference>
<dbReference type="FunFam" id="3.50.7.10:FF:000001">
    <property type="entry name" value="60 kDa chaperonin"/>
    <property type="match status" value="1"/>
</dbReference>
<dbReference type="Gene3D" id="3.50.7.10">
    <property type="entry name" value="GroEL"/>
    <property type="match status" value="1"/>
</dbReference>
<dbReference type="Gene3D" id="1.10.560.10">
    <property type="entry name" value="GroEL-like equatorial domain"/>
    <property type="match status" value="1"/>
</dbReference>
<dbReference type="Gene3D" id="3.30.260.10">
    <property type="entry name" value="TCP-1-like chaperonin intermediate domain"/>
    <property type="match status" value="1"/>
</dbReference>
<dbReference type="HAMAP" id="MF_00600">
    <property type="entry name" value="CH60"/>
    <property type="match status" value="1"/>
</dbReference>
<dbReference type="InterPro" id="IPR018370">
    <property type="entry name" value="Chaperonin_Cpn60_CS"/>
</dbReference>
<dbReference type="InterPro" id="IPR001844">
    <property type="entry name" value="Cpn60/GroEL"/>
</dbReference>
<dbReference type="InterPro" id="IPR002423">
    <property type="entry name" value="Cpn60/GroEL/TCP-1"/>
</dbReference>
<dbReference type="InterPro" id="IPR027409">
    <property type="entry name" value="GroEL-like_apical_dom_sf"/>
</dbReference>
<dbReference type="InterPro" id="IPR027413">
    <property type="entry name" value="GROEL-like_equatorial_sf"/>
</dbReference>
<dbReference type="InterPro" id="IPR027410">
    <property type="entry name" value="TCP-1-like_intermed_sf"/>
</dbReference>
<dbReference type="NCBIfam" id="TIGR02348">
    <property type="entry name" value="GroEL"/>
    <property type="match status" value="1"/>
</dbReference>
<dbReference type="NCBIfam" id="NF000592">
    <property type="entry name" value="PRK00013.1"/>
    <property type="match status" value="1"/>
</dbReference>
<dbReference type="NCBIfam" id="NF009487">
    <property type="entry name" value="PRK12849.1"/>
    <property type="match status" value="1"/>
</dbReference>
<dbReference type="NCBIfam" id="NF009488">
    <property type="entry name" value="PRK12850.1"/>
    <property type="match status" value="1"/>
</dbReference>
<dbReference type="NCBIfam" id="NF009489">
    <property type="entry name" value="PRK12851.1"/>
    <property type="match status" value="1"/>
</dbReference>
<dbReference type="PANTHER" id="PTHR45633">
    <property type="entry name" value="60 KDA HEAT SHOCK PROTEIN, MITOCHONDRIAL"/>
    <property type="match status" value="1"/>
</dbReference>
<dbReference type="Pfam" id="PF00118">
    <property type="entry name" value="Cpn60_TCP1"/>
    <property type="match status" value="1"/>
</dbReference>
<dbReference type="PRINTS" id="PR00298">
    <property type="entry name" value="CHAPERONIN60"/>
</dbReference>
<dbReference type="SUPFAM" id="SSF52029">
    <property type="entry name" value="GroEL apical domain-like"/>
    <property type="match status" value="1"/>
</dbReference>
<dbReference type="SUPFAM" id="SSF48592">
    <property type="entry name" value="GroEL equatorial domain-like"/>
    <property type="match status" value="1"/>
</dbReference>
<dbReference type="SUPFAM" id="SSF54849">
    <property type="entry name" value="GroEL-intermediate domain like"/>
    <property type="match status" value="1"/>
</dbReference>
<dbReference type="PROSITE" id="PS00296">
    <property type="entry name" value="CHAPERONINS_CPN60"/>
    <property type="match status" value="1"/>
</dbReference>
<evidence type="ECO:0000255" key="1">
    <source>
        <dbReference type="HAMAP-Rule" id="MF_00600"/>
    </source>
</evidence>
<evidence type="ECO:0000256" key="2">
    <source>
        <dbReference type="SAM" id="MobiDB-lite"/>
    </source>
</evidence>
<accession>A4TEN6</accession>
<name>CH601_MYCGI</name>
<proteinExistence type="inferred from homology"/>
<reference key="1">
    <citation type="submission" date="2007-04" db="EMBL/GenBank/DDBJ databases">
        <title>Complete sequence of chromosome of Mycobacterium gilvum PYR-GCK.</title>
        <authorList>
            <consortium name="US DOE Joint Genome Institute"/>
            <person name="Copeland A."/>
            <person name="Lucas S."/>
            <person name="Lapidus A."/>
            <person name="Barry K."/>
            <person name="Detter J.C."/>
            <person name="Glavina del Rio T."/>
            <person name="Hammon N."/>
            <person name="Israni S."/>
            <person name="Dalin E."/>
            <person name="Tice H."/>
            <person name="Pitluck S."/>
            <person name="Chain P."/>
            <person name="Malfatti S."/>
            <person name="Shin M."/>
            <person name="Vergez L."/>
            <person name="Schmutz J."/>
            <person name="Larimer F."/>
            <person name="Land M."/>
            <person name="Hauser L."/>
            <person name="Kyrpides N."/>
            <person name="Mikhailova N."/>
            <person name="Miller C."/>
            <person name="Richardson P."/>
        </authorList>
    </citation>
    <scope>NUCLEOTIDE SEQUENCE [LARGE SCALE GENOMIC DNA]</scope>
    <source>
        <strain>PYR-GCK</strain>
    </source>
</reference>
<feature type="chain" id="PRO_0000332017" description="Chaperonin GroEL 1">
    <location>
        <begin position="1"/>
        <end position="541"/>
    </location>
</feature>
<feature type="region of interest" description="Disordered" evidence="2">
    <location>
        <begin position="520"/>
        <end position="541"/>
    </location>
</feature>
<feature type="compositionally biased region" description="Basic and acidic residues" evidence="2">
    <location>
        <begin position="523"/>
        <end position="533"/>
    </location>
</feature>
<feature type="binding site" evidence="1">
    <location>
        <begin position="29"/>
        <end position="32"/>
    </location>
    <ligand>
        <name>ATP</name>
        <dbReference type="ChEBI" id="CHEBI:30616"/>
    </ligand>
</feature>
<feature type="binding site" evidence="1">
    <location>
        <begin position="86"/>
        <end position="90"/>
    </location>
    <ligand>
        <name>ATP</name>
        <dbReference type="ChEBI" id="CHEBI:30616"/>
    </ligand>
</feature>
<feature type="binding site" evidence="1">
    <location>
        <position position="413"/>
    </location>
    <ligand>
        <name>ATP</name>
        <dbReference type="ChEBI" id="CHEBI:30616"/>
    </ligand>
</feature>
<feature type="binding site" evidence="1">
    <location>
        <begin position="478"/>
        <end position="480"/>
    </location>
    <ligand>
        <name>ATP</name>
        <dbReference type="ChEBI" id="CHEBI:30616"/>
    </ligand>
</feature>
<feature type="binding site" evidence="1">
    <location>
        <position position="494"/>
    </location>
    <ligand>
        <name>ATP</name>
        <dbReference type="ChEBI" id="CHEBI:30616"/>
    </ligand>
</feature>
<keyword id="KW-0067">ATP-binding</keyword>
<keyword id="KW-0143">Chaperone</keyword>
<keyword id="KW-0963">Cytoplasm</keyword>
<keyword id="KW-0413">Isomerase</keyword>
<keyword id="KW-0547">Nucleotide-binding</keyword>
<organism>
    <name type="scientific">Mycolicibacterium gilvum (strain PYR-GCK)</name>
    <name type="common">Mycobacterium gilvum (strain PYR-GCK)</name>
    <dbReference type="NCBI Taxonomy" id="350054"/>
    <lineage>
        <taxon>Bacteria</taxon>
        <taxon>Bacillati</taxon>
        <taxon>Actinomycetota</taxon>
        <taxon>Actinomycetes</taxon>
        <taxon>Mycobacteriales</taxon>
        <taxon>Mycobacteriaceae</taxon>
        <taxon>Mycolicibacterium</taxon>
    </lineage>
</organism>
<sequence length="541" mass="56025">MSKQIEFNETARRAMEAGVDKLADAVKVTLGPRGRHVVLAKSWGGPTVTNDGVTIAREIDLEDPFENLGAQLVKSVATKTNDVAGDGTTTATVLAQALVKAGLRNVAAGANPIALGAGIAKAADAVSEALLASATPVKDAKSIGQVATVSSRDELVGELVGEAMTKVGTDGVVTVEESSTLNTELEVTEGVGFDKGFISAYFVTDFDSQEAVLEDALVLLHREKISSLPDLLPLLEKVAEAGKPLLIVAEDVEGEALSTLVVNAIRKTLKAVAVKAPFFGDRRKAFLDDLAVVTGGQVVNPDVGLVLREVGLEVLGTARRVVVDKDSTVIVDGGGTQDAIEGRKGQLRAEIEVSDSDWDREKLEERLAKLAGGVAVIKVGAATETDLKKRKEAVEDAVAAAKAAVEEGIVIGGGAALVHAGSALDSLRSELKGDELLGVEVFASALSSPLYWIATNAGLDGAVVVNKVSELPAGQGFNAATLEYGDLIGDGVIDPVKVTRSAVVNAASVARMVLTTETAVVEKPAEAEDDGHGHGHGHHHH</sequence>
<protein>
    <recommendedName>
        <fullName evidence="1">Chaperonin GroEL 1</fullName>
        <ecNumber evidence="1">5.6.1.7</ecNumber>
    </recommendedName>
    <alternativeName>
        <fullName evidence="1">60 kDa chaperonin 1</fullName>
    </alternativeName>
    <alternativeName>
        <fullName evidence="1">Chaperonin-60 1</fullName>
        <shortName evidence="1">Cpn60 1</shortName>
    </alternativeName>
</protein>
<comment type="function">
    <text evidence="1">Together with its co-chaperonin GroES, plays an essential role in assisting protein folding. The GroEL-GroES system forms a nano-cage that allows encapsulation of the non-native substrate proteins and provides a physical environment optimized to promote and accelerate protein folding.</text>
</comment>
<comment type="catalytic activity">
    <reaction evidence="1">
        <text>ATP + H2O + a folded polypeptide = ADP + phosphate + an unfolded polypeptide.</text>
        <dbReference type="EC" id="5.6.1.7"/>
    </reaction>
</comment>
<comment type="subunit">
    <text evidence="1">Forms a cylinder of 14 subunits composed of two heptameric rings stacked back-to-back. Interacts with the co-chaperonin GroES.</text>
</comment>
<comment type="subcellular location">
    <subcellularLocation>
        <location evidence="1">Cytoplasm</location>
    </subcellularLocation>
</comment>
<comment type="similarity">
    <text evidence="1">Belongs to the chaperonin (HSP60) family.</text>
</comment>